<feature type="chain" id="PRO_1000067652" description="UPF0353 protein BCG_1543">
    <location>
        <begin position="1"/>
        <end position="335"/>
    </location>
</feature>
<feature type="transmembrane region" description="Helical" evidence="1">
    <location>
        <begin position="18"/>
        <end position="38"/>
    </location>
</feature>
<feature type="transmembrane region" description="Helical" evidence="1">
    <location>
        <begin position="67"/>
        <end position="87"/>
    </location>
</feature>
<feature type="transmembrane region" description="Helical" evidence="1">
    <location>
        <begin position="309"/>
        <end position="329"/>
    </location>
</feature>
<feature type="domain" description="VWFA" evidence="1">
    <location>
        <begin position="98"/>
        <end position="294"/>
    </location>
</feature>
<keyword id="KW-1003">Cell membrane</keyword>
<keyword id="KW-0472">Membrane</keyword>
<keyword id="KW-0812">Transmembrane</keyword>
<keyword id="KW-1133">Transmembrane helix</keyword>
<accession>A1KIS1</accession>
<organism>
    <name type="scientific">Mycobacterium bovis (strain BCG / Pasteur 1173P2)</name>
    <dbReference type="NCBI Taxonomy" id="410289"/>
    <lineage>
        <taxon>Bacteria</taxon>
        <taxon>Bacillati</taxon>
        <taxon>Actinomycetota</taxon>
        <taxon>Actinomycetes</taxon>
        <taxon>Mycobacteriales</taxon>
        <taxon>Mycobacteriaceae</taxon>
        <taxon>Mycobacterium</taxon>
        <taxon>Mycobacterium tuberculosis complex</taxon>
    </lineage>
</organism>
<name>Y1543_MYCBP</name>
<reference key="1">
    <citation type="journal article" date="2007" name="Proc. Natl. Acad. Sci. U.S.A.">
        <title>Genome plasticity of BCG and impact on vaccine efficacy.</title>
        <authorList>
            <person name="Brosch R."/>
            <person name="Gordon S.V."/>
            <person name="Garnier T."/>
            <person name="Eiglmeier K."/>
            <person name="Frigui W."/>
            <person name="Valenti P."/>
            <person name="Dos Santos S."/>
            <person name="Duthoy S."/>
            <person name="Lacroix C."/>
            <person name="Garcia-Pelayo C."/>
            <person name="Inwald J.K."/>
            <person name="Golby P."/>
            <person name="Garcia J.N."/>
            <person name="Hewinson R.G."/>
            <person name="Behr M.A."/>
            <person name="Quail M.A."/>
            <person name="Churcher C."/>
            <person name="Barrell B.G."/>
            <person name="Parkhill J."/>
            <person name="Cole S.T."/>
        </authorList>
    </citation>
    <scope>NUCLEOTIDE SEQUENCE [LARGE SCALE GENOMIC DNA]</scope>
    <source>
        <strain>BCG / Pasteur 1173P2</strain>
    </source>
</reference>
<dbReference type="EMBL" id="AM408590">
    <property type="protein sequence ID" value="CAL71530.1"/>
    <property type="molecule type" value="Genomic_DNA"/>
</dbReference>
<dbReference type="RefSeq" id="WP_011799186.1">
    <property type="nucleotide sequence ID" value="NC_008769.1"/>
</dbReference>
<dbReference type="SMR" id="A1KIS1"/>
<dbReference type="KEGG" id="mbb:BCG_1543"/>
<dbReference type="HOGENOM" id="CLU_024570_2_0_11"/>
<dbReference type="Proteomes" id="UP000001472">
    <property type="component" value="Chromosome"/>
</dbReference>
<dbReference type="GO" id="GO:0005886">
    <property type="term" value="C:plasma membrane"/>
    <property type="evidence" value="ECO:0007669"/>
    <property type="project" value="UniProtKB-SubCell"/>
</dbReference>
<dbReference type="CDD" id="cd00198">
    <property type="entry name" value="vWFA"/>
    <property type="match status" value="1"/>
</dbReference>
<dbReference type="FunFam" id="3.40.50.410:FF:000078">
    <property type="entry name" value="UPF0353 protein RN09_1826"/>
    <property type="match status" value="1"/>
</dbReference>
<dbReference type="Gene3D" id="3.40.50.410">
    <property type="entry name" value="von Willebrand factor, type A domain"/>
    <property type="match status" value="1"/>
</dbReference>
<dbReference type="HAMAP" id="MF_01340">
    <property type="entry name" value="UPF0353"/>
    <property type="match status" value="1"/>
</dbReference>
<dbReference type="InterPro" id="IPR024163">
    <property type="entry name" value="Aerotolerance_reg_N"/>
</dbReference>
<dbReference type="InterPro" id="IPR022933">
    <property type="entry name" value="UPF0353"/>
</dbReference>
<dbReference type="InterPro" id="IPR050768">
    <property type="entry name" value="UPF0353/GerABKA_families"/>
</dbReference>
<dbReference type="InterPro" id="IPR002035">
    <property type="entry name" value="VWF_A"/>
</dbReference>
<dbReference type="InterPro" id="IPR036465">
    <property type="entry name" value="vWFA_dom_sf"/>
</dbReference>
<dbReference type="NCBIfam" id="NF010238">
    <property type="entry name" value="PRK13685.1"/>
    <property type="match status" value="1"/>
</dbReference>
<dbReference type="PANTHER" id="PTHR22550:SF5">
    <property type="entry name" value="LEUCINE ZIPPER PROTEIN 4"/>
    <property type="match status" value="1"/>
</dbReference>
<dbReference type="PANTHER" id="PTHR22550">
    <property type="entry name" value="SPORE GERMINATION PROTEIN"/>
    <property type="match status" value="1"/>
</dbReference>
<dbReference type="Pfam" id="PF07584">
    <property type="entry name" value="BatA"/>
    <property type="match status" value="1"/>
</dbReference>
<dbReference type="Pfam" id="PF13519">
    <property type="entry name" value="VWA_2"/>
    <property type="match status" value="1"/>
</dbReference>
<dbReference type="SMART" id="SM00327">
    <property type="entry name" value="VWA"/>
    <property type="match status" value="1"/>
</dbReference>
<dbReference type="SUPFAM" id="SSF53300">
    <property type="entry name" value="vWA-like"/>
    <property type="match status" value="1"/>
</dbReference>
<dbReference type="PROSITE" id="PS50234">
    <property type="entry name" value="VWFA"/>
    <property type="match status" value="1"/>
</dbReference>
<proteinExistence type="inferred from homology"/>
<protein>
    <recommendedName>
        <fullName evidence="1">UPF0353 protein BCG_1543</fullName>
    </recommendedName>
</protein>
<comment type="subcellular location">
    <subcellularLocation>
        <location evidence="1">Cell membrane</location>
        <topology evidence="1">Multi-pass membrane protein</topology>
    </subcellularLocation>
</comment>
<comment type="similarity">
    <text evidence="1">Belongs to the UPF0353 family.</text>
</comment>
<sequence length="335" mass="36031">MTLPLLGPMTLSGFAHSWFFLFLFVVAGLVALYILMQLARQRRMLRFANMELLESVAPKRPSRWRHVPAILLVLSLLLFTIAMAGPTHDVRIPRNRAVVMLVIDVSQSMRATDVEPSRMVAAQEAAKQFADELTPGINLGLIAYAGTATVLVSPTTNREATKNALDKLQFADRTATGEAIFTALQAIATVGAVIGGGDTPPPARIVLFSDGKETMPTNPDNPKGAYTAARTAKDQGVPISTISFGTPYGFVEIDDQRQPVPVDDETMKKVAQLSGGNSYNAATLAELRAVYSSLQQQIGYETIKGDASVGWLRLGALALALAALAALLINRRLPT</sequence>
<evidence type="ECO:0000255" key="1">
    <source>
        <dbReference type="HAMAP-Rule" id="MF_01340"/>
    </source>
</evidence>
<gene>
    <name type="ordered locus">BCG_1543</name>
</gene>